<accession>Q7A978</accession>
<accession>Q8X765</accession>
<feature type="chain" id="PRO_0000354781" description="Catalase-peroxidase 1">
    <location>
        <begin position="1"/>
        <end position="726"/>
    </location>
</feature>
<feature type="region of interest" description="Disordered" evidence="2">
    <location>
        <begin position="1"/>
        <end position="33"/>
    </location>
</feature>
<feature type="active site" description="Proton acceptor" evidence="1">
    <location>
        <position position="106"/>
    </location>
</feature>
<feature type="binding site" description="axial binding residue" evidence="1">
    <location>
        <position position="267"/>
    </location>
    <ligand>
        <name>heme b</name>
        <dbReference type="ChEBI" id="CHEBI:60344"/>
    </ligand>
    <ligandPart>
        <name>Fe</name>
        <dbReference type="ChEBI" id="CHEBI:18248"/>
    </ligandPart>
</feature>
<feature type="site" description="Transition state stabilizer" evidence="1">
    <location>
        <position position="102"/>
    </location>
</feature>
<feature type="cross-link" description="Tryptophyl-tyrosyl-methioninium (Trp-Tyr) (with M-252)" evidence="1">
    <location>
        <begin position="105"/>
        <end position="226"/>
    </location>
</feature>
<feature type="cross-link" description="Tryptophyl-tyrosyl-methioninium (Tyr-Met) (with W-105)" evidence="1">
    <location>
        <begin position="226"/>
        <end position="252"/>
    </location>
</feature>
<comment type="function">
    <text evidence="1">Bifunctional enzyme with both catalase and broad-spectrum peroxidase activity.</text>
</comment>
<comment type="catalytic activity">
    <reaction evidence="1">
        <text>H2O2 + AH2 = A + 2 H2O</text>
        <dbReference type="Rhea" id="RHEA:30275"/>
        <dbReference type="ChEBI" id="CHEBI:13193"/>
        <dbReference type="ChEBI" id="CHEBI:15377"/>
        <dbReference type="ChEBI" id="CHEBI:16240"/>
        <dbReference type="ChEBI" id="CHEBI:17499"/>
        <dbReference type="EC" id="1.11.1.21"/>
    </reaction>
</comment>
<comment type="catalytic activity">
    <reaction evidence="1">
        <text>2 H2O2 = O2 + 2 H2O</text>
        <dbReference type="Rhea" id="RHEA:20309"/>
        <dbReference type="ChEBI" id="CHEBI:15377"/>
        <dbReference type="ChEBI" id="CHEBI:15379"/>
        <dbReference type="ChEBI" id="CHEBI:16240"/>
        <dbReference type="EC" id="1.11.1.21"/>
    </reaction>
</comment>
<comment type="cofactor">
    <cofactor evidence="1">
        <name>heme b</name>
        <dbReference type="ChEBI" id="CHEBI:60344"/>
    </cofactor>
    <text evidence="1">Binds 1 heme b (iron(II)-protoporphyrin IX) group per dimer.</text>
</comment>
<comment type="subunit">
    <text evidence="1">Homodimer or homotetramer.</text>
</comment>
<comment type="PTM">
    <text evidence="1">Formation of the three residue Trp-Tyr-Met cross-link is important for the catalase, but not the peroxidase activity of the enzyme.</text>
</comment>
<comment type="similarity">
    <text evidence="1">Belongs to the peroxidase family. Peroxidase/catalase subfamily.</text>
</comment>
<protein>
    <recommendedName>
        <fullName evidence="1">Catalase-peroxidase 1</fullName>
        <shortName evidence="1">CP 1</shortName>
        <ecNumber evidence="1">1.11.1.21</ecNumber>
    </recommendedName>
    <alternativeName>
        <fullName evidence="1">Peroxidase/catalase 1</fullName>
    </alternativeName>
</protein>
<organism>
    <name type="scientific">Escherichia coli O157:H7</name>
    <dbReference type="NCBI Taxonomy" id="83334"/>
    <lineage>
        <taxon>Bacteria</taxon>
        <taxon>Pseudomonadati</taxon>
        <taxon>Pseudomonadota</taxon>
        <taxon>Gammaproteobacteria</taxon>
        <taxon>Enterobacterales</taxon>
        <taxon>Enterobacteriaceae</taxon>
        <taxon>Escherichia</taxon>
    </lineage>
</organism>
<reference key="1">
    <citation type="journal article" date="2001" name="DNA Res.">
        <title>Complete genome sequence of enterohemorrhagic Escherichia coli O157:H7 and genomic comparison with a laboratory strain K-12.</title>
        <authorList>
            <person name="Hayashi T."/>
            <person name="Makino K."/>
            <person name="Ohnishi M."/>
            <person name="Kurokawa K."/>
            <person name="Ishii K."/>
            <person name="Yokoyama K."/>
            <person name="Han C.-G."/>
            <person name="Ohtsubo E."/>
            <person name="Nakayama K."/>
            <person name="Murata T."/>
            <person name="Tanaka M."/>
            <person name="Tobe T."/>
            <person name="Iida T."/>
            <person name="Takami H."/>
            <person name="Honda T."/>
            <person name="Sasakawa C."/>
            <person name="Ogasawara N."/>
            <person name="Yasunaga T."/>
            <person name="Kuhara S."/>
            <person name="Shiba T."/>
            <person name="Hattori M."/>
            <person name="Shinagawa H."/>
        </authorList>
    </citation>
    <scope>NUCLEOTIDE SEQUENCE [LARGE SCALE GENOMIC DNA]</scope>
    <source>
        <strain>O157:H7 / Sakai / RIMD 0509952 / EHEC</strain>
    </source>
</reference>
<reference key="2">
    <citation type="journal article" date="2001" name="Nature">
        <title>Genome sequence of enterohaemorrhagic Escherichia coli O157:H7.</title>
        <authorList>
            <person name="Perna N.T."/>
            <person name="Plunkett G. III"/>
            <person name="Burland V."/>
            <person name="Mau B."/>
            <person name="Glasner J.D."/>
            <person name="Rose D.J."/>
            <person name="Mayhew G.F."/>
            <person name="Evans P.S."/>
            <person name="Gregor J."/>
            <person name="Kirkpatrick H.A."/>
            <person name="Posfai G."/>
            <person name="Hackett J."/>
            <person name="Klink S."/>
            <person name="Boutin A."/>
            <person name="Shao Y."/>
            <person name="Miller L."/>
            <person name="Grotbeck E.J."/>
            <person name="Davis N.W."/>
            <person name="Lim A."/>
            <person name="Dimalanta E.T."/>
            <person name="Potamousis K."/>
            <person name="Apodaca J."/>
            <person name="Anantharaman T.S."/>
            <person name="Lin J."/>
            <person name="Yen G."/>
            <person name="Schwartz D.C."/>
            <person name="Welch R.A."/>
            <person name="Blattner F.R."/>
        </authorList>
    </citation>
    <scope>NUCLEOTIDE SEQUENCE [LARGE SCALE GENOMIC DNA]</scope>
    <source>
        <strain>O157:H7 / EDL933 / ATCC 700927 / EHEC</strain>
    </source>
</reference>
<name>KATG1_ECO57</name>
<proteinExistence type="inferred from homology"/>
<gene>
    <name evidence="1" type="primary">katG1</name>
    <name type="ordered locus">Z5497</name>
    <name type="ordered locus">ECs4871</name>
</gene>
<keyword id="KW-0349">Heme</keyword>
<keyword id="KW-0376">Hydrogen peroxide</keyword>
<keyword id="KW-0408">Iron</keyword>
<keyword id="KW-0479">Metal-binding</keyword>
<keyword id="KW-0560">Oxidoreductase</keyword>
<keyword id="KW-0575">Peroxidase</keyword>
<keyword id="KW-1185">Reference proteome</keyword>
<evidence type="ECO:0000255" key="1">
    <source>
        <dbReference type="HAMAP-Rule" id="MF_01961"/>
    </source>
</evidence>
<evidence type="ECO:0000256" key="2">
    <source>
        <dbReference type="SAM" id="MobiDB-lite"/>
    </source>
</evidence>
<sequence>MSTSDDIHNTTATGKCPFHQGGHDQSAGAGTTTRDWWPNQLRVDLLNQHSNRSNPLGEDFDYRKEFSKLDYYGLKKDLKALLTESQPWWPADWGSYAGLFIRMAWHGAGTYRSIDGRGGAGRGQQRFAPLNSWPDNVSLDKARRLLWPIKQKYGQKISWADLFILAGNVALENSGFRTFGFGAGREDVWEPDLDVNWGDEKAWLTHRHPEALAKAPLGATEMGLIYVNPEGPDHSGEPLSAAAAIRATFGNMGMNDEETVALIAGGHTLGKTHGAGPTSNVGPDPEAAPIEEQGLGWASTYGSGVGADAITSGLEVVWTQTPTQWSNYFFENLFKYEWVQTRSPAGAIQFEAVDAPEIIPDPFDPSKKRKPTMLVTDLTLRFDPEFEKISRRFLNDPQAFNEAFARAWFKLTHRDMGPKSRYIGPEVPKEDLIWQDPLPQPIYNPTEQDIIDLKFAIADSGLSVSELVSVAWASASTFRGGDKRGGANGARLALMPQRDWDVNAAAVRALPVLEKIQKESGKASLADIIVLAGVVGVEKAASAAGLSIHVPFAPGRVDARQDQTDIEMFELLEPIADGFRNYRARLDVSTTESLLIDKAQQLTLTAPEMTALVGGMRVLGANFDGSKNGVFTDRVGVLSNDFFVNLLDMRYEWKATDESKELFEGRDRETGEVKYTASRADLVFGSNSVLRAVAEVYASSDAHEKFVKDFVAAWVKVMNLDRFDLL</sequence>
<dbReference type="EC" id="1.11.1.21" evidence="1"/>
<dbReference type="EMBL" id="BA000007">
    <property type="protein sequence ID" value="BAB38294.1"/>
    <property type="molecule type" value="Genomic_DNA"/>
</dbReference>
<dbReference type="EMBL" id="AE005174">
    <property type="protein sequence ID" value="AAG59143.1"/>
    <property type="molecule type" value="Genomic_DNA"/>
</dbReference>
<dbReference type="PIR" id="C86085">
    <property type="entry name" value="C86085"/>
</dbReference>
<dbReference type="PIR" id="G91237">
    <property type="entry name" value="G91237"/>
</dbReference>
<dbReference type="SMR" id="Q7A978"/>
<dbReference type="STRING" id="155864.Z5497"/>
<dbReference type="PeroxiBase" id="2718">
    <property type="entry name" value="EcoH7CP01_Sakai"/>
</dbReference>
<dbReference type="PeroxiBase" id="3673">
    <property type="entry name" value="EcoH7CP01_EDL933"/>
</dbReference>
<dbReference type="KEGG" id="ece:Z5497"/>
<dbReference type="KEGG" id="ecs:ECs_4871"/>
<dbReference type="PATRIC" id="fig|386585.9.peg.5095"/>
<dbReference type="eggNOG" id="COG0376">
    <property type="taxonomic scope" value="Bacteria"/>
</dbReference>
<dbReference type="HOGENOM" id="CLU_025424_2_0_6"/>
<dbReference type="OMA" id="GPETTWL"/>
<dbReference type="Proteomes" id="UP000000558">
    <property type="component" value="Chromosome"/>
</dbReference>
<dbReference type="Proteomes" id="UP000002519">
    <property type="component" value="Chromosome"/>
</dbReference>
<dbReference type="GO" id="GO:0005829">
    <property type="term" value="C:cytosol"/>
    <property type="evidence" value="ECO:0007669"/>
    <property type="project" value="TreeGrafter"/>
</dbReference>
<dbReference type="GO" id="GO:0004096">
    <property type="term" value="F:catalase activity"/>
    <property type="evidence" value="ECO:0007669"/>
    <property type="project" value="UniProtKB-UniRule"/>
</dbReference>
<dbReference type="GO" id="GO:0020037">
    <property type="term" value="F:heme binding"/>
    <property type="evidence" value="ECO:0007669"/>
    <property type="project" value="InterPro"/>
</dbReference>
<dbReference type="GO" id="GO:0046872">
    <property type="term" value="F:metal ion binding"/>
    <property type="evidence" value="ECO:0007669"/>
    <property type="project" value="UniProtKB-KW"/>
</dbReference>
<dbReference type="GO" id="GO:0070301">
    <property type="term" value="P:cellular response to hydrogen peroxide"/>
    <property type="evidence" value="ECO:0007669"/>
    <property type="project" value="TreeGrafter"/>
</dbReference>
<dbReference type="GO" id="GO:0042744">
    <property type="term" value="P:hydrogen peroxide catabolic process"/>
    <property type="evidence" value="ECO:0007669"/>
    <property type="project" value="UniProtKB-KW"/>
</dbReference>
<dbReference type="CDD" id="cd08200">
    <property type="entry name" value="catalase_peroxidase_2"/>
    <property type="match status" value="1"/>
</dbReference>
<dbReference type="FunFam" id="1.10.420.10:FF:000002">
    <property type="entry name" value="Catalase-peroxidase"/>
    <property type="match status" value="1"/>
</dbReference>
<dbReference type="FunFam" id="1.10.420.10:FF:000004">
    <property type="entry name" value="Catalase-peroxidase"/>
    <property type="match status" value="1"/>
</dbReference>
<dbReference type="FunFam" id="1.10.520.10:FF:000002">
    <property type="entry name" value="Catalase-peroxidase"/>
    <property type="match status" value="1"/>
</dbReference>
<dbReference type="Gene3D" id="1.10.520.10">
    <property type="match status" value="2"/>
</dbReference>
<dbReference type="Gene3D" id="1.10.420.10">
    <property type="entry name" value="Peroxidase, domain 2"/>
    <property type="match status" value="2"/>
</dbReference>
<dbReference type="HAMAP" id="MF_01961">
    <property type="entry name" value="Catal_peroxid"/>
    <property type="match status" value="1"/>
</dbReference>
<dbReference type="InterPro" id="IPR000763">
    <property type="entry name" value="Catalase_peroxidase"/>
</dbReference>
<dbReference type="InterPro" id="IPR002016">
    <property type="entry name" value="Haem_peroxidase"/>
</dbReference>
<dbReference type="InterPro" id="IPR010255">
    <property type="entry name" value="Haem_peroxidase_sf"/>
</dbReference>
<dbReference type="InterPro" id="IPR019794">
    <property type="entry name" value="Peroxidases_AS"/>
</dbReference>
<dbReference type="InterPro" id="IPR019793">
    <property type="entry name" value="Peroxidases_heam-ligand_BS"/>
</dbReference>
<dbReference type="NCBIfam" id="TIGR00198">
    <property type="entry name" value="cat_per_HPI"/>
    <property type="match status" value="1"/>
</dbReference>
<dbReference type="NCBIfam" id="NF011635">
    <property type="entry name" value="PRK15061.1"/>
    <property type="match status" value="1"/>
</dbReference>
<dbReference type="PANTHER" id="PTHR30555:SF0">
    <property type="entry name" value="CATALASE-PEROXIDASE"/>
    <property type="match status" value="1"/>
</dbReference>
<dbReference type="PANTHER" id="PTHR30555">
    <property type="entry name" value="HYDROPEROXIDASE I, BIFUNCTIONAL CATALASE-PEROXIDASE"/>
    <property type="match status" value="1"/>
</dbReference>
<dbReference type="Pfam" id="PF00141">
    <property type="entry name" value="peroxidase"/>
    <property type="match status" value="2"/>
</dbReference>
<dbReference type="PRINTS" id="PR00460">
    <property type="entry name" value="BPEROXIDASE"/>
</dbReference>
<dbReference type="PRINTS" id="PR00458">
    <property type="entry name" value="PEROXIDASE"/>
</dbReference>
<dbReference type="SUPFAM" id="SSF48113">
    <property type="entry name" value="Heme-dependent peroxidases"/>
    <property type="match status" value="2"/>
</dbReference>
<dbReference type="PROSITE" id="PS00435">
    <property type="entry name" value="PEROXIDASE_1"/>
    <property type="match status" value="1"/>
</dbReference>
<dbReference type="PROSITE" id="PS00436">
    <property type="entry name" value="PEROXIDASE_2"/>
    <property type="match status" value="1"/>
</dbReference>
<dbReference type="PROSITE" id="PS50873">
    <property type="entry name" value="PEROXIDASE_4"/>
    <property type="match status" value="1"/>
</dbReference>